<accession>Q62JI5</accession>
<proteinExistence type="inferred from homology"/>
<feature type="chain" id="PRO_0000237776" description="2-C-methyl-D-erythritol 4-phosphate cytidylyltransferase">
    <location>
        <begin position="1"/>
        <end position="236"/>
    </location>
</feature>
<feature type="site" description="Transition state stabilizer" evidence="1">
    <location>
        <position position="17"/>
    </location>
</feature>
<feature type="site" description="Transition state stabilizer" evidence="1">
    <location>
        <position position="24"/>
    </location>
</feature>
<feature type="site" description="Positions MEP for the nucleophilic attack" evidence="1">
    <location>
        <position position="159"/>
    </location>
</feature>
<feature type="site" description="Positions MEP for the nucleophilic attack" evidence="1">
    <location>
        <position position="215"/>
    </location>
</feature>
<evidence type="ECO:0000255" key="1">
    <source>
        <dbReference type="HAMAP-Rule" id="MF_00108"/>
    </source>
</evidence>
<comment type="function">
    <text evidence="1">Catalyzes the formation of 4-diphosphocytidyl-2-C-methyl-D-erythritol from CTP and 2-C-methyl-D-erythritol 4-phosphate (MEP).</text>
</comment>
<comment type="catalytic activity">
    <reaction evidence="1">
        <text>2-C-methyl-D-erythritol 4-phosphate + CTP + H(+) = 4-CDP-2-C-methyl-D-erythritol + diphosphate</text>
        <dbReference type="Rhea" id="RHEA:13429"/>
        <dbReference type="ChEBI" id="CHEBI:15378"/>
        <dbReference type="ChEBI" id="CHEBI:33019"/>
        <dbReference type="ChEBI" id="CHEBI:37563"/>
        <dbReference type="ChEBI" id="CHEBI:57823"/>
        <dbReference type="ChEBI" id="CHEBI:58262"/>
        <dbReference type="EC" id="2.7.7.60"/>
    </reaction>
</comment>
<comment type="pathway">
    <text evidence="1">Isoprenoid biosynthesis; isopentenyl diphosphate biosynthesis via DXP pathway; isopentenyl diphosphate from 1-deoxy-D-xylulose 5-phosphate: step 2/6.</text>
</comment>
<comment type="similarity">
    <text evidence="1">Belongs to the IspD/TarI cytidylyltransferase family. IspD subfamily.</text>
</comment>
<reference key="1">
    <citation type="journal article" date="2004" name="Proc. Natl. Acad. Sci. U.S.A.">
        <title>Structural flexibility in the Burkholderia mallei genome.</title>
        <authorList>
            <person name="Nierman W.C."/>
            <person name="DeShazer D."/>
            <person name="Kim H.S."/>
            <person name="Tettelin H."/>
            <person name="Nelson K.E."/>
            <person name="Feldblyum T.V."/>
            <person name="Ulrich R.L."/>
            <person name="Ronning C.M."/>
            <person name="Brinkac L.M."/>
            <person name="Daugherty S.C."/>
            <person name="Davidsen T.D."/>
            <person name="DeBoy R.T."/>
            <person name="Dimitrov G."/>
            <person name="Dodson R.J."/>
            <person name="Durkin A.S."/>
            <person name="Gwinn M.L."/>
            <person name="Haft D.H."/>
            <person name="Khouri H.M."/>
            <person name="Kolonay J.F."/>
            <person name="Madupu R."/>
            <person name="Mohammoud Y."/>
            <person name="Nelson W.C."/>
            <person name="Radune D."/>
            <person name="Romero C.M."/>
            <person name="Sarria S."/>
            <person name="Selengut J."/>
            <person name="Shamblin C."/>
            <person name="Sullivan S.A."/>
            <person name="White O."/>
            <person name="Yu Y."/>
            <person name="Zafar N."/>
            <person name="Zhou L."/>
            <person name="Fraser C.M."/>
        </authorList>
    </citation>
    <scope>NUCLEOTIDE SEQUENCE [LARGE SCALE GENOMIC DNA]</scope>
    <source>
        <strain>ATCC 23344</strain>
    </source>
</reference>
<organism>
    <name type="scientific">Burkholderia mallei (strain ATCC 23344)</name>
    <dbReference type="NCBI Taxonomy" id="243160"/>
    <lineage>
        <taxon>Bacteria</taxon>
        <taxon>Pseudomonadati</taxon>
        <taxon>Pseudomonadota</taxon>
        <taxon>Betaproteobacteria</taxon>
        <taxon>Burkholderiales</taxon>
        <taxon>Burkholderiaceae</taxon>
        <taxon>Burkholderia</taxon>
        <taxon>pseudomallei group</taxon>
    </lineage>
</organism>
<gene>
    <name evidence="1" type="primary">ispD</name>
    <name type="ordered locus">BMA1490</name>
</gene>
<protein>
    <recommendedName>
        <fullName evidence="1">2-C-methyl-D-erythritol 4-phosphate cytidylyltransferase</fullName>
        <ecNumber evidence="1">2.7.7.60</ecNumber>
    </recommendedName>
    <alternativeName>
        <fullName evidence="1">4-diphosphocytidyl-2C-methyl-D-erythritol synthase</fullName>
    </alternativeName>
    <alternativeName>
        <fullName evidence="1">MEP cytidylyltransferase</fullName>
        <shortName evidence="1">MCT</shortName>
    </alternativeName>
</protein>
<name>ISPD_BURMA</name>
<sequence>MTSRLFALIPCAGTGSRSGSALPKQYRTLAGRALLHYTLAAFDACSEFAQTLVVISPDDAHFDARRFAGLRFAVRRCGGASRQASVMNGLIQLAEFGATDADWVLVHDAARPGITPALIRTLIGALKDDPVGGIVALPVADTLKRVPAGGDAIERTESRNGLWQAQTPQMFRIGMLRDAIRRAQLDGHDLTDEASAIEWAGHTPRVVQGSLRNFKVTYPEDFDLAEAILAQPARAS</sequence>
<dbReference type="EC" id="2.7.7.60" evidence="1"/>
<dbReference type="EMBL" id="CP000010">
    <property type="protein sequence ID" value="AAU47699.1"/>
    <property type="molecule type" value="Genomic_DNA"/>
</dbReference>
<dbReference type="RefSeq" id="WP_004191584.1">
    <property type="nucleotide sequence ID" value="NC_006348.1"/>
</dbReference>
<dbReference type="RefSeq" id="YP_103134.1">
    <property type="nucleotide sequence ID" value="NC_006348.1"/>
</dbReference>
<dbReference type="SMR" id="Q62JI5"/>
<dbReference type="GeneID" id="93060628"/>
<dbReference type="KEGG" id="bma:BMA1490"/>
<dbReference type="PATRIC" id="fig|243160.12.peg.1533"/>
<dbReference type="eggNOG" id="COG1211">
    <property type="taxonomic scope" value="Bacteria"/>
</dbReference>
<dbReference type="HOGENOM" id="CLU_061281_3_0_4"/>
<dbReference type="UniPathway" id="UPA00056">
    <property type="reaction ID" value="UER00093"/>
</dbReference>
<dbReference type="Proteomes" id="UP000006693">
    <property type="component" value="Chromosome 1"/>
</dbReference>
<dbReference type="GO" id="GO:0050518">
    <property type="term" value="F:2-C-methyl-D-erythritol 4-phosphate cytidylyltransferase activity"/>
    <property type="evidence" value="ECO:0007669"/>
    <property type="project" value="UniProtKB-UniRule"/>
</dbReference>
<dbReference type="GO" id="GO:0019288">
    <property type="term" value="P:isopentenyl diphosphate biosynthetic process, methylerythritol 4-phosphate pathway"/>
    <property type="evidence" value="ECO:0007669"/>
    <property type="project" value="UniProtKB-UniRule"/>
</dbReference>
<dbReference type="CDD" id="cd02516">
    <property type="entry name" value="CDP-ME_synthetase"/>
    <property type="match status" value="1"/>
</dbReference>
<dbReference type="FunFam" id="3.90.550.10:FF:000003">
    <property type="entry name" value="2-C-methyl-D-erythritol 4-phosphate cytidylyltransferase"/>
    <property type="match status" value="1"/>
</dbReference>
<dbReference type="Gene3D" id="3.90.550.10">
    <property type="entry name" value="Spore Coat Polysaccharide Biosynthesis Protein SpsA, Chain A"/>
    <property type="match status" value="1"/>
</dbReference>
<dbReference type="HAMAP" id="MF_00108">
    <property type="entry name" value="IspD"/>
    <property type="match status" value="1"/>
</dbReference>
<dbReference type="InterPro" id="IPR001228">
    <property type="entry name" value="IspD"/>
</dbReference>
<dbReference type="InterPro" id="IPR034683">
    <property type="entry name" value="IspD/TarI"/>
</dbReference>
<dbReference type="InterPro" id="IPR050088">
    <property type="entry name" value="IspD/TarI_cytidylyltransf_bact"/>
</dbReference>
<dbReference type="InterPro" id="IPR018294">
    <property type="entry name" value="ISPD_synthase_CS"/>
</dbReference>
<dbReference type="InterPro" id="IPR029044">
    <property type="entry name" value="Nucleotide-diphossugar_trans"/>
</dbReference>
<dbReference type="NCBIfam" id="TIGR00453">
    <property type="entry name" value="ispD"/>
    <property type="match status" value="1"/>
</dbReference>
<dbReference type="PANTHER" id="PTHR32125">
    <property type="entry name" value="2-C-METHYL-D-ERYTHRITOL 4-PHOSPHATE CYTIDYLYLTRANSFERASE, CHLOROPLASTIC"/>
    <property type="match status" value="1"/>
</dbReference>
<dbReference type="PANTHER" id="PTHR32125:SF4">
    <property type="entry name" value="2-C-METHYL-D-ERYTHRITOL 4-PHOSPHATE CYTIDYLYLTRANSFERASE, CHLOROPLASTIC"/>
    <property type="match status" value="1"/>
</dbReference>
<dbReference type="Pfam" id="PF01128">
    <property type="entry name" value="IspD"/>
    <property type="match status" value="1"/>
</dbReference>
<dbReference type="SUPFAM" id="SSF53448">
    <property type="entry name" value="Nucleotide-diphospho-sugar transferases"/>
    <property type="match status" value="1"/>
</dbReference>
<dbReference type="PROSITE" id="PS01295">
    <property type="entry name" value="ISPD"/>
    <property type="match status" value="1"/>
</dbReference>
<keyword id="KW-0414">Isoprene biosynthesis</keyword>
<keyword id="KW-0548">Nucleotidyltransferase</keyword>
<keyword id="KW-1185">Reference proteome</keyword>
<keyword id="KW-0808">Transferase</keyword>